<protein>
    <recommendedName>
        <fullName evidence="4">Protein sdf-9</fullName>
    </recommendedName>
    <alternativeName>
        <fullName evidence="8">Synthetic dauer formation 9</fullName>
    </alternativeName>
</protein>
<gene>
    <name evidence="8" type="primary">sdf-9</name>
    <name evidence="8" type="synonym">eak-5</name>
    <name evidence="8" type="ORF">Y44A6D.4</name>
</gene>
<organism evidence="7">
    <name type="scientific">Caenorhabditis elegans</name>
    <dbReference type="NCBI Taxonomy" id="6239"/>
    <lineage>
        <taxon>Eukaryota</taxon>
        <taxon>Metazoa</taxon>
        <taxon>Ecdysozoa</taxon>
        <taxon>Nematoda</taxon>
        <taxon>Chromadorea</taxon>
        <taxon>Rhabditida</taxon>
        <taxon>Rhabditina</taxon>
        <taxon>Rhabditomorpha</taxon>
        <taxon>Rhabditoidea</taxon>
        <taxon>Rhabditidae</taxon>
        <taxon>Peloderinae</taxon>
        <taxon>Caenorhabditis</taxon>
    </lineage>
</organism>
<keyword id="KW-1003">Cell membrane</keyword>
<keyword id="KW-0963">Cytoplasm</keyword>
<keyword id="KW-0472">Membrane</keyword>
<keyword id="KW-1185">Reference proteome</keyword>
<reference evidence="6" key="1">
    <citation type="journal article" date="2003" name="Development">
        <title>SDF-9, a protein tyrosine phosphatase-like molecule, regulates the L3/dauer developmental decision through hormonal signaling in C. elegans.</title>
        <authorList>
            <person name="Ohkura K."/>
            <person name="Suzuki N."/>
            <person name="Ishihara T."/>
            <person name="Katsura I."/>
        </authorList>
    </citation>
    <scope>NUCLEOTIDE SEQUENCE [MRNA]</scope>
    <scope>FUNCTION</scope>
    <scope>SUBCELLULAR LOCATION</scope>
    <scope>TISSUE SPECIFICITY</scope>
    <scope>MUTAGENESIS OF PRO-175 AND ARG-264</scope>
</reference>
<reference evidence="7" key="2">
    <citation type="journal article" date="1998" name="Science">
        <title>Genome sequence of the nematode C. elegans: a platform for investigating biology.</title>
        <authorList>
            <consortium name="The C. elegans sequencing consortium"/>
        </authorList>
    </citation>
    <scope>NUCLEOTIDE SEQUENCE [LARGE SCALE GENOMIC DNA]</scope>
    <source>
        <strain evidence="7">Bristol N2</strain>
    </source>
</reference>
<reference evidence="4" key="3">
    <citation type="journal article" date="2006" name="PLoS Genet.">
        <title>Two membrane-associated tyrosine phosphatase homologs potentiate C. elegans AKT-1/PKB signaling.</title>
        <authorList>
            <person name="Hu P.J."/>
            <person name="Xu J."/>
            <person name="Ruvkun G."/>
        </authorList>
    </citation>
    <scope>FUNCTION</scope>
    <scope>SUBCELLULAR LOCATION</scope>
    <scope>TISSUE SPECIFICITY</scope>
    <scope>MUTAGENESIS OF ARG-264</scope>
</reference>
<name>EAK5_CAEEL</name>
<evidence type="ECO:0000255" key="1">
    <source>
        <dbReference type="PROSITE-ProRule" id="PRU00160"/>
    </source>
</evidence>
<evidence type="ECO:0000269" key="2">
    <source>
    </source>
</evidence>
<evidence type="ECO:0000269" key="3">
    <source>
    </source>
</evidence>
<evidence type="ECO:0000305" key="4"/>
<evidence type="ECO:0000305" key="5">
    <source>
    </source>
</evidence>
<evidence type="ECO:0000312" key="6">
    <source>
        <dbReference type="EMBL" id="BAC75705.1"/>
    </source>
</evidence>
<evidence type="ECO:0000312" key="7">
    <source>
        <dbReference type="Proteomes" id="UP000001940"/>
    </source>
</evidence>
<evidence type="ECO:0000312" key="8">
    <source>
        <dbReference type="WormBase" id="Y44A6D.4"/>
    </source>
</evidence>
<dbReference type="EMBL" id="AB108783">
    <property type="protein sequence ID" value="BAC75705.1"/>
    <property type="molecule type" value="mRNA"/>
</dbReference>
<dbReference type="EMBL" id="BX284605">
    <property type="protein sequence ID" value="CAA19518.3"/>
    <property type="molecule type" value="Genomic_DNA"/>
</dbReference>
<dbReference type="PIR" id="T26897">
    <property type="entry name" value="T26897"/>
</dbReference>
<dbReference type="RefSeq" id="NP_508013.2">
    <property type="nucleotide sequence ID" value="NM_075612.4"/>
</dbReference>
<dbReference type="SMR" id="G5EGA9"/>
<dbReference type="FunCoup" id="G5EGA9">
    <property type="interactions" value="69"/>
</dbReference>
<dbReference type="STRING" id="6239.Y44A6D.4.1"/>
<dbReference type="PaxDb" id="6239-Y44A6D.4"/>
<dbReference type="EnsemblMetazoa" id="Y44A6D.4.1">
    <property type="protein sequence ID" value="Y44A6D.4.1"/>
    <property type="gene ID" value="WBGene00004748"/>
</dbReference>
<dbReference type="GeneID" id="189901"/>
<dbReference type="KEGG" id="cel:CELE_Y44A6D.4"/>
<dbReference type="AGR" id="WB:WBGene00004748"/>
<dbReference type="CTD" id="189901"/>
<dbReference type="WormBase" id="Y44A6D.4">
    <property type="protein sequence ID" value="CE35663"/>
    <property type="gene ID" value="WBGene00004748"/>
    <property type="gene designation" value="sdf-9"/>
</dbReference>
<dbReference type="eggNOG" id="KOG0789">
    <property type="taxonomic scope" value="Eukaryota"/>
</dbReference>
<dbReference type="GeneTree" id="ENSGT00940000165839"/>
<dbReference type="InParanoid" id="G5EGA9"/>
<dbReference type="OrthoDB" id="9450131at2759"/>
<dbReference type="PhylomeDB" id="G5EGA9"/>
<dbReference type="Reactome" id="R-CEL-6798695">
    <property type="pathway name" value="Neutrophil degranulation"/>
</dbReference>
<dbReference type="Reactome" id="R-CEL-6807004">
    <property type="pathway name" value="Negative regulation of MET activity"/>
</dbReference>
<dbReference type="PRO" id="PR:G5EGA9"/>
<dbReference type="Proteomes" id="UP000001940">
    <property type="component" value="Chromosome V"/>
</dbReference>
<dbReference type="Bgee" id="WBGene00004748">
    <property type="expression patterns" value="Expressed in larva"/>
</dbReference>
<dbReference type="GO" id="GO:0005737">
    <property type="term" value="C:cytoplasm"/>
    <property type="evidence" value="ECO:0007669"/>
    <property type="project" value="UniProtKB-SubCell"/>
</dbReference>
<dbReference type="GO" id="GO:0005886">
    <property type="term" value="C:plasma membrane"/>
    <property type="evidence" value="ECO:0000314"/>
    <property type="project" value="WormBase"/>
</dbReference>
<dbReference type="GO" id="GO:0040024">
    <property type="term" value="P:dauer larval development"/>
    <property type="evidence" value="ECO:0000315"/>
    <property type="project" value="WormBase"/>
</dbReference>
<dbReference type="GO" id="GO:0007165">
    <property type="term" value="P:signal transduction"/>
    <property type="evidence" value="ECO:0000318"/>
    <property type="project" value="GO_Central"/>
</dbReference>
<dbReference type="CDD" id="cd00047">
    <property type="entry name" value="PTPc"/>
    <property type="match status" value="1"/>
</dbReference>
<dbReference type="FunFam" id="3.90.190.10:FF:000233">
    <property type="entry name" value="Protein Tyrosine Phosphatase"/>
    <property type="match status" value="1"/>
</dbReference>
<dbReference type="Gene3D" id="3.90.190.10">
    <property type="entry name" value="Protein tyrosine phosphatase superfamily"/>
    <property type="match status" value="1"/>
</dbReference>
<dbReference type="InterPro" id="IPR029021">
    <property type="entry name" value="Prot-tyrosine_phosphatase-like"/>
</dbReference>
<dbReference type="InterPro" id="IPR050348">
    <property type="entry name" value="Protein-Tyr_Phosphatase"/>
</dbReference>
<dbReference type="InterPro" id="IPR000242">
    <property type="entry name" value="PTP_cat"/>
</dbReference>
<dbReference type="InterPro" id="IPR003595">
    <property type="entry name" value="Tyr_Pase_cat"/>
</dbReference>
<dbReference type="PANTHER" id="PTHR19134:SF561">
    <property type="entry name" value="PROTEIN TYROSINE PHOSPHATASE 36E, ISOFORM A"/>
    <property type="match status" value="1"/>
</dbReference>
<dbReference type="PANTHER" id="PTHR19134">
    <property type="entry name" value="RECEPTOR-TYPE TYROSINE-PROTEIN PHOSPHATASE"/>
    <property type="match status" value="1"/>
</dbReference>
<dbReference type="Pfam" id="PF00102">
    <property type="entry name" value="Y_phosphatase"/>
    <property type="match status" value="1"/>
</dbReference>
<dbReference type="PRINTS" id="PR00700">
    <property type="entry name" value="PRTYPHPHTASE"/>
</dbReference>
<dbReference type="SMART" id="SM00194">
    <property type="entry name" value="PTPc"/>
    <property type="match status" value="1"/>
</dbReference>
<dbReference type="SMART" id="SM00404">
    <property type="entry name" value="PTPc_motif"/>
    <property type="match status" value="1"/>
</dbReference>
<dbReference type="SUPFAM" id="SSF52799">
    <property type="entry name" value="(Phosphotyrosine protein) phosphatases II"/>
    <property type="match status" value="1"/>
</dbReference>
<dbReference type="PROSITE" id="PS50055">
    <property type="entry name" value="TYR_PHOSPHATASE_PTP"/>
    <property type="match status" value="1"/>
</dbReference>
<feature type="chain" id="PRO_0000436047" description="Protein sdf-9" evidence="4">
    <location>
        <begin position="1"/>
        <end position="345"/>
    </location>
</feature>
<feature type="domain" description="Tyrosine-protein phosphatase" evidence="1">
    <location>
        <begin position="33"/>
        <end position="284"/>
    </location>
</feature>
<feature type="mutagenesis site" description="In ut163; moderate increase in constitutive dauer larva formation at 25 degrees Celsius. Constitutive larva dauer formation is further increased in absence of cholesterol. Lack of radial constriction in the pharynx of constitutive dauer-like larvae." evidence="2">
    <original>P</original>
    <variation>L</variation>
    <location>
        <position position="175"/>
    </location>
</feature>
<feature type="mutagenesis site" description="In ut187 and ut157; moderate increase in constitutive dauer formation at 25 degrees Celsius. Constitutive dauer formation is further increased in absence of cholesterol. Normal lifespan." evidence="2 3">
    <original>R</original>
    <variation>K</variation>
    <location>
        <position position="264"/>
    </location>
</feature>
<accession>G5EGA9</accession>
<sequence length="345" mass="40338">MEKYSIRSNIVHKLDDNQPLLSERVTARLEAVNRNRVVKIVPQHRYNVRLTPSMLNRDGYINASLMEFSDVGQKYILTGIPSEDKVFAFWQMVLEQRSPTIIQFADNVEEKLEHYDKYFPDKGDVWSYGHLQVERKSYAIHQGNFHTRNFILRKGNETHRVLHFTVFGWTETTTPIMQDFLALRKVMKDTGALNMINPASALFRSTMRRYIHTPPSFAPIIQSARGSSRAGAFVVIDLLIRMIDGKKTNLYSVEDLIVKCKHMRIHCVPVALHHSFIYEAVLDYLLRRNPRFQDFKEPLIAYSESCFVKWSSMDKEIEKFINTKTWFLNESSRNKFLRSVMPPVV</sequence>
<proteinExistence type="evidence at protein level"/>
<comment type="function">
    <text evidence="2 3">Together with eak-4 and phosphatase eak-6, negatively regulates dauer larva formation downstream of insulin-like receptor daf-2 and in parallel of age-1, pdk-1 and akt-1.</text>
</comment>
<comment type="subcellular location">
    <subcellularLocation>
        <location evidence="2">Cytoplasm</location>
    </subcellularLocation>
    <subcellularLocation>
        <location evidence="3">Cell membrane</location>
        <topology evidence="3">Peripheral membrane protein</topology>
    </subcellularLocation>
    <text evidence="2">Localizes to dendrite-like structure in XXXL/R cells. Membrane localization is daf-2/InsR-independent.</text>
</comment>
<comment type="tissue specificity">
    <text evidence="2 3">Expressed in the 2 embryonic head hypodermal cells XXXL/R.</text>
</comment>
<comment type="similarity">
    <text evidence="4">Belongs to the protein-tyrosine phosphatase family.</text>
</comment>
<comment type="caution">
    <text evidence="5">Predicted to be inactive as the cysteine residue involved in the catalytic reaction is a lysine at position 223.</text>
</comment>